<protein>
    <recommendedName>
        <fullName>Interleukin-4</fullName>
        <shortName>IL-4</shortName>
    </recommendedName>
    <alternativeName>
        <fullName>B-cell stimulatory factor 1</fullName>
        <shortName>BSF-1</shortName>
    </alternativeName>
    <alternativeName>
        <fullName>Lymphocyte stimulatory factor 1</fullName>
    </alternativeName>
</protein>
<dbReference type="EMBL" id="AY234221">
    <property type="protein sequence ID" value="AAO85334.1"/>
    <property type="molecule type" value="mRNA"/>
</dbReference>
<dbReference type="RefSeq" id="NP_001106123.1">
    <property type="nucleotide sequence ID" value="NM_001112653.2"/>
</dbReference>
<dbReference type="SMR" id="Q865Y0"/>
<dbReference type="STRING" id="9555.ENSPANP00000011397"/>
<dbReference type="GlyCosmos" id="Q865Y0">
    <property type="glycosylation" value="1 site, No reported glycans"/>
</dbReference>
<dbReference type="GeneID" id="100126747"/>
<dbReference type="KEGG" id="panu:100126747"/>
<dbReference type="CTD" id="3565"/>
<dbReference type="eggNOG" id="KOG3886">
    <property type="taxonomic scope" value="Eukaryota"/>
</dbReference>
<dbReference type="OrthoDB" id="7187at314294"/>
<dbReference type="Proteomes" id="UP000028761">
    <property type="component" value="Unplaced"/>
</dbReference>
<dbReference type="GO" id="GO:0005615">
    <property type="term" value="C:extracellular space"/>
    <property type="evidence" value="ECO:0007669"/>
    <property type="project" value="UniProtKB-KW"/>
</dbReference>
<dbReference type="GO" id="GO:0005125">
    <property type="term" value="F:cytokine activity"/>
    <property type="evidence" value="ECO:0007669"/>
    <property type="project" value="UniProtKB-KW"/>
</dbReference>
<dbReference type="GO" id="GO:0008083">
    <property type="term" value="F:growth factor activity"/>
    <property type="evidence" value="ECO:0007669"/>
    <property type="project" value="UniProtKB-KW"/>
</dbReference>
<dbReference type="GO" id="GO:0005136">
    <property type="term" value="F:interleukin-4 receptor binding"/>
    <property type="evidence" value="ECO:0007669"/>
    <property type="project" value="InterPro"/>
</dbReference>
<dbReference type="GO" id="GO:0042113">
    <property type="term" value="P:B cell activation"/>
    <property type="evidence" value="ECO:0007669"/>
    <property type="project" value="UniProtKB-KW"/>
</dbReference>
<dbReference type="GO" id="GO:0006955">
    <property type="term" value="P:immune response"/>
    <property type="evidence" value="ECO:0007669"/>
    <property type="project" value="InterPro"/>
</dbReference>
<dbReference type="GO" id="GO:0035771">
    <property type="term" value="P:interleukin-4-mediated signaling pathway"/>
    <property type="evidence" value="ECO:0007669"/>
    <property type="project" value="TreeGrafter"/>
</dbReference>
<dbReference type="GO" id="GO:0050728">
    <property type="term" value="P:negative regulation of inflammatory response"/>
    <property type="evidence" value="ECO:0007669"/>
    <property type="project" value="TreeGrafter"/>
</dbReference>
<dbReference type="GO" id="GO:0045893">
    <property type="term" value="P:positive regulation of DNA-templated transcription"/>
    <property type="evidence" value="ECO:0007669"/>
    <property type="project" value="TreeGrafter"/>
</dbReference>
<dbReference type="GO" id="GO:0016239">
    <property type="term" value="P:positive regulation of macroautophagy"/>
    <property type="evidence" value="ECO:0000250"/>
    <property type="project" value="UniProtKB"/>
</dbReference>
<dbReference type="GO" id="GO:0050776">
    <property type="term" value="P:regulation of immune response"/>
    <property type="evidence" value="ECO:0007669"/>
    <property type="project" value="TreeGrafter"/>
</dbReference>
<dbReference type="FunFam" id="1.20.1250.10:FF:000014">
    <property type="entry name" value="Interleukin-4"/>
    <property type="match status" value="1"/>
</dbReference>
<dbReference type="Gene3D" id="1.20.1250.10">
    <property type="match status" value="1"/>
</dbReference>
<dbReference type="InterPro" id="IPR009079">
    <property type="entry name" value="4_helix_cytokine-like_core"/>
</dbReference>
<dbReference type="InterPro" id="IPR002354">
    <property type="entry name" value="IL-4"/>
</dbReference>
<dbReference type="InterPro" id="IPR001325">
    <property type="entry name" value="IL-4/IL-13"/>
</dbReference>
<dbReference type="InterPro" id="IPR018096">
    <property type="entry name" value="IL-4/IL-13_CS"/>
</dbReference>
<dbReference type="PANTHER" id="PTHR47401">
    <property type="entry name" value="INTERLEUKIN-4"/>
    <property type="match status" value="1"/>
</dbReference>
<dbReference type="PANTHER" id="PTHR47401:SF1">
    <property type="entry name" value="INTERLEUKIN-4"/>
    <property type="match status" value="1"/>
</dbReference>
<dbReference type="Pfam" id="PF00727">
    <property type="entry name" value="IL4"/>
    <property type="match status" value="1"/>
</dbReference>
<dbReference type="PIRSF" id="PIRSF001941">
    <property type="entry name" value="Interleukin_4"/>
    <property type="match status" value="1"/>
</dbReference>
<dbReference type="PRINTS" id="PR00431">
    <property type="entry name" value="INTERLEUKIN4"/>
</dbReference>
<dbReference type="SMART" id="SM00190">
    <property type="entry name" value="IL4_13"/>
    <property type="match status" value="1"/>
</dbReference>
<dbReference type="SUPFAM" id="SSF47266">
    <property type="entry name" value="4-helical cytokines"/>
    <property type="match status" value="1"/>
</dbReference>
<dbReference type="PROSITE" id="PS00838">
    <property type="entry name" value="INTERLEUKIN_4_13"/>
    <property type="match status" value="1"/>
</dbReference>
<keyword id="KW-0075">B-cell activation</keyword>
<keyword id="KW-0202">Cytokine</keyword>
<keyword id="KW-1015">Disulfide bond</keyword>
<keyword id="KW-0325">Glycoprotein</keyword>
<keyword id="KW-0339">Growth factor</keyword>
<keyword id="KW-1185">Reference proteome</keyword>
<keyword id="KW-0964">Secreted</keyword>
<keyword id="KW-0732">Signal</keyword>
<organism>
    <name type="scientific">Papio anubis</name>
    <name type="common">Olive baboon</name>
    <dbReference type="NCBI Taxonomy" id="9555"/>
    <lineage>
        <taxon>Eukaryota</taxon>
        <taxon>Metazoa</taxon>
        <taxon>Chordata</taxon>
        <taxon>Craniata</taxon>
        <taxon>Vertebrata</taxon>
        <taxon>Euteleostomi</taxon>
        <taxon>Mammalia</taxon>
        <taxon>Eutheria</taxon>
        <taxon>Euarchontoglires</taxon>
        <taxon>Primates</taxon>
        <taxon>Haplorrhini</taxon>
        <taxon>Catarrhini</taxon>
        <taxon>Cercopithecidae</taxon>
        <taxon>Cercopithecinae</taxon>
        <taxon>Papio</taxon>
    </lineage>
</organism>
<comment type="function">
    <text evidence="2">Participates in at least several B-cell activation processes as well as of other cell types. It is a costimulator of DNA-synthesis. It induces the expression of class II MHC molecules on resting B-cells. It enhances both secretion and cell surface expression of IgE and IgG1. It also regulates the expression of the low affinity Fc receptor for IgE (CD23) on both lymphocytes and monocytes. Positively regulates IL31RA expression in macrophages. Stimulates autophagy in dendritic cells by interfering with mTORC1 signaling and through the induction of RUFY4.</text>
</comment>
<comment type="subcellular location">
    <subcellularLocation>
        <location>Secreted</location>
    </subcellularLocation>
</comment>
<comment type="similarity">
    <text evidence="4">Belongs to the IL-4/IL-13 family.</text>
</comment>
<proteinExistence type="evidence at transcript level"/>
<accession>Q865Y0</accession>
<name>IL4_PAPAN</name>
<gene>
    <name type="primary">IL4</name>
</gene>
<reference key="1">
    <citation type="submission" date="2003-02" db="EMBL/GenBank/DDBJ databases">
        <title>Nonhuman primate cytokines.</title>
        <authorList>
            <person name="Villinger F.J."/>
        </authorList>
    </citation>
    <scope>NUCLEOTIDE SEQUENCE [MRNA]</scope>
</reference>
<feature type="signal peptide" evidence="1">
    <location>
        <begin position="1"/>
        <end position="24"/>
    </location>
</feature>
<feature type="chain" id="PRO_0000015540" description="Interleukin-4">
    <location>
        <begin position="25"/>
        <end position="153"/>
    </location>
</feature>
<feature type="glycosylation site" description="N-linked (GlcNAc...) asparagine" evidence="3">
    <location>
        <position position="62"/>
    </location>
</feature>
<feature type="disulfide bond" evidence="3">
    <location>
        <begin position="27"/>
        <end position="151"/>
    </location>
</feature>
<feature type="disulfide bond" evidence="3">
    <location>
        <begin position="48"/>
        <end position="89"/>
    </location>
</feature>
<feature type="disulfide bond" evidence="3">
    <location>
        <begin position="70"/>
        <end position="123"/>
    </location>
</feature>
<sequence length="153" mass="17534">MGLTSQLLPPLFFLLACAGNFAHGHNCHIALREIIETLNSLTEQKTLCTKLTITDILAASKNTTEKETFCRAATVLRQFYSHHEKDTRCLGATAQQFHRHKQLIRFLKRLDRNLWGLAGLNSCPVKEASQSTLEDFLERLKTIMKEKYSKCRR</sequence>
<evidence type="ECO:0000250" key="1"/>
<evidence type="ECO:0000250" key="2">
    <source>
        <dbReference type="UniProtKB" id="P07750"/>
    </source>
</evidence>
<evidence type="ECO:0000255" key="3"/>
<evidence type="ECO:0000305" key="4"/>